<feature type="chain" id="PRO_0000363858" description="ABC transporter C family member 14">
    <location>
        <begin position="1"/>
        <end position="1317"/>
    </location>
</feature>
<feature type="transmembrane region" description="Helical" evidence="2">
    <location>
        <begin position="127"/>
        <end position="147"/>
    </location>
</feature>
<feature type="transmembrane region" description="Helical" evidence="2">
    <location>
        <begin position="156"/>
        <end position="176"/>
    </location>
</feature>
<feature type="transmembrane region" description="Helical" evidence="2">
    <location>
        <begin position="249"/>
        <end position="269"/>
    </location>
</feature>
<feature type="transmembrane region" description="Helical" evidence="2">
    <location>
        <begin position="341"/>
        <end position="361"/>
    </location>
</feature>
<feature type="transmembrane region" description="Helical" evidence="2">
    <location>
        <begin position="375"/>
        <end position="395"/>
    </location>
</feature>
<feature type="transmembrane region" description="Helical" evidence="2">
    <location>
        <begin position="734"/>
        <end position="754"/>
    </location>
</feature>
<feature type="transmembrane region" description="Helical" evidence="2">
    <location>
        <begin position="778"/>
        <end position="798"/>
    </location>
</feature>
<feature type="transmembrane region" description="Helical" evidence="2">
    <location>
        <begin position="871"/>
        <end position="891"/>
    </location>
</feature>
<feature type="transmembrane region" description="Helical" evidence="2">
    <location>
        <begin position="969"/>
        <end position="989"/>
    </location>
</feature>
<feature type="transmembrane region" description="Helical" evidence="2">
    <location>
        <begin position="992"/>
        <end position="1012"/>
    </location>
</feature>
<feature type="domain" description="ABC transmembrane type-1 1" evidence="2">
    <location>
        <begin position="119"/>
        <end position="404"/>
    </location>
</feature>
<feature type="domain" description="ABC transporter 1" evidence="1">
    <location>
        <begin position="490"/>
        <end position="710"/>
    </location>
</feature>
<feature type="domain" description="ABC transmembrane type-1 2" evidence="2">
    <location>
        <begin position="744"/>
        <end position="1027"/>
    </location>
</feature>
<feature type="domain" description="ABC transporter 2" evidence="1">
    <location>
        <begin position="1071"/>
        <end position="1306"/>
    </location>
</feature>
<feature type="region of interest" description="Disordered" evidence="3">
    <location>
        <begin position="426"/>
        <end position="451"/>
    </location>
</feature>
<feature type="compositionally biased region" description="Low complexity" evidence="3">
    <location>
        <begin position="427"/>
        <end position="449"/>
    </location>
</feature>
<feature type="binding site" evidence="1">
    <location>
        <begin position="522"/>
        <end position="529"/>
    </location>
    <ligand>
        <name>ATP</name>
        <dbReference type="ChEBI" id="CHEBI:30616"/>
    </ligand>
</feature>
<feature type="binding site" evidence="1">
    <location>
        <begin position="1105"/>
        <end position="1112"/>
    </location>
    <ligand>
        <name>ATP</name>
        <dbReference type="ChEBI" id="CHEBI:30616"/>
    </ligand>
</feature>
<name>ABCCE_DICDI</name>
<evidence type="ECO:0000255" key="1">
    <source>
        <dbReference type="PROSITE-ProRule" id="PRU00434"/>
    </source>
</evidence>
<evidence type="ECO:0000255" key="2">
    <source>
        <dbReference type="PROSITE-ProRule" id="PRU00441"/>
    </source>
</evidence>
<evidence type="ECO:0000256" key="3">
    <source>
        <dbReference type="SAM" id="MobiDB-lite"/>
    </source>
</evidence>
<evidence type="ECO:0000305" key="4"/>
<reference key="1">
    <citation type="journal article" date="2005" name="Nature">
        <title>The genome of the social amoeba Dictyostelium discoideum.</title>
        <authorList>
            <person name="Eichinger L."/>
            <person name="Pachebat J.A."/>
            <person name="Gloeckner G."/>
            <person name="Rajandream M.A."/>
            <person name="Sucgang R."/>
            <person name="Berriman M."/>
            <person name="Song J."/>
            <person name="Olsen R."/>
            <person name="Szafranski K."/>
            <person name="Xu Q."/>
            <person name="Tunggal B."/>
            <person name="Kummerfeld S."/>
            <person name="Madera M."/>
            <person name="Konfortov B.A."/>
            <person name="Rivero F."/>
            <person name="Bankier A.T."/>
            <person name="Lehmann R."/>
            <person name="Hamlin N."/>
            <person name="Davies R."/>
            <person name="Gaudet P."/>
            <person name="Fey P."/>
            <person name="Pilcher K."/>
            <person name="Chen G."/>
            <person name="Saunders D."/>
            <person name="Sodergren E.J."/>
            <person name="Davis P."/>
            <person name="Kerhornou A."/>
            <person name="Nie X."/>
            <person name="Hall N."/>
            <person name="Anjard C."/>
            <person name="Hemphill L."/>
            <person name="Bason N."/>
            <person name="Farbrother P."/>
            <person name="Desany B."/>
            <person name="Just E."/>
            <person name="Morio T."/>
            <person name="Rost R."/>
            <person name="Churcher C.M."/>
            <person name="Cooper J."/>
            <person name="Haydock S."/>
            <person name="van Driessche N."/>
            <person name="Cronin A."/>
            <person name="Goodhead I."/>
            <person name="Muzny D.M."/>
            <person name="Mourier T."/>
            <person name="Pain A."/>
            <person name="Lu M."/>
            <person name="Harper D."/>
            <person name="Lindsay R."/>
            <person name="Hauser H."/>
            <person name="James K.D."/>
            <person name="Quiles M."/>
            <person name="Madan Babu M."/>
            <person name="Saito T."/>
            <person name="Buchrieser C."/>
            <person name="Wardroper A."/>
            <person name="Felder M."/>
            <person name="Thangavelu M."/>
            <person name="Johnson D."/>
            <person name="Knights A."/>
            <person name="Loulseged H."/>
            <person name="Mungall K.L."/>
            <person name="Oliver K."/>
            <person name="Price C."/>
            <person name="Quail M.A."/>
            <person name="Urushihara H."/>
            <person name="Hernandez J."/>
            <person name="Rabbinowitsch E."/>
            <person name="Steffen D."/>
            <person name="Sanders M."/>
            <person name="Ma J."/>
            <person name="Kohara Y."/>
            <person name="Sharp S."/>
            <person name="Simmonds M.N."/>
            <person name="Spiegler S."/>
            <person name="Tivey A."/>
            <person name="Sugano S."/>
            <person name="White B."/>
            <person name="Walker D."/>
            <person name="Woodward J.R."/>
            <person name="Winckler T."/>
            <person name="Tanaka Y."/>
            <person name="Shaulsky G."/>
            <person name="Schleicher M."/>
            <person name="Weinstock G.M."/>
            <person name="Rosenthal A."/>
            <person name="Cox E.C."/>
            <person name="Chisholm R.L."/>
            <person name="Gibbs R.A."/>
            <person name="Loomis W.F."/>
            <person name="Platzer M."/>
            <person name="Kay R.R."/>
            <person name="Williams J.G."/>
            <person name="Dear P.H."/>
            <person name="Noegel A.A."/>
            <person name="Barrell B.G."/>
            <person name="Kuspa A."/>
        </authorList>
    </citation>
    <scope>NUCLEOTIDE SEQUENCE [LARGE SCALE GENOMIC DNA]</scope>
    <source>
        <strain>AX4</strain>
    </source>
</reference>
<accession>Q54K24</accession>
<gene>
    <name type="primary">abcC14</name>
    <name type="ORF">DDB_G0287589</name>
</gene>
<keyword id="KW-0067">ATP-binding</keyword>
<keyword id="KW-0472">Membrane</keyword>
<keyword id="KW-0547">Nucleotide-binding</keyword>
<keyword id="KW-1185">Reference proteome</keyword>
<keyword id="KW-0677">Repeat</keyword>
<keyword id="KW-0812">Transmembrane</keyword>
<keyword id="KW-1133">Transmembrane helix</keyword>
<keyword id="KW-0813">Transport</keyword>
<dbReference type="EMBL" id="AAFI02000103">
    <property type="protein sequence ID" value="EAL63603.1"/>
    <property type="molecule type" value="Genomic_DNA"/>
</dbReference>
<dbReference type="RefSeq" id="XP_637140.1">
    <property type="nucleotide sequence ID" value="XM_632048.1"/>
</dbReference>
<dbReference type="SMR" id="Q54K24"/>
<dbReference type="FunCoup" id="Q54K24">
    <property type="interactions" value="16"/>
</dbReference>
<dbReference type="STRING" id="44689.Q54K24"/>
<dbReference type="PaxDb" id="44689-DDB0219976"/>
<dbReference type="EnsemblProtists" id="EAL63603">
    <property type="protein sequence ID" value="EAL63603"/>
    <property type="gene ID" value="DDB_G0287589"/>
</dbReference>
<dbReference type="GeneID" id="8626235"/>
<dbReference type="KEGG" id="ddi:DDB_G0287589"/>
<dbReference type="dictyBase" id="DDB_G0287589">
    <property type="gene designation" value="abcC14"/>
</dbReference>
<dbReference type="VEuPathDB" id="AmoebaDB:DDB_G0287589"/>
<dbReference type="eggNOG" id="KOG0054">
    <property type="taxonomic scope" value="Eukaryota"/>
</dbReference>
<dbReference type="HOGENOM" id="CLU_000604_27_1_1"/>
<dbReference type="InParanoid" id="Q54K24"/>
<dbReference type="OMA" id="WWVNDEY"/>
<dbReference type="PhylomeDB" id="Q54K24"/>
<dbReference type="Reactome" id="R-DDI-114608">
    <property type="pathway name" value="Platelet degranulation"/>
</dbReference>
<dbReference type="Reactome" id="R-DDI-382556">
    <property type="pathway name" value="ABC-family proteins mediated transport"/>
</dbReference>
<dbReference type="Reactome" id="R-DDI-8856825">
    <property type="pathway name" value="Cargo recognition for clathrin-mediated endocytosis"/>
</dbReference>
<dbReference type="Reactome" id="R-DDI-8856828">
    <property type="pathway name" value="Clathrin-mediated endocytosis"/>
</dbReference>
<dbReference type="Reactome" id="R-DDI-9646399">
    <property type="pathway name" value="Aggrephagy"/>
</dbReference>
<dbReference type="Reactome" id="R-DDI-9748787">
    <property type="pathway name" value="Azathioprine ADME"/>
</dbReference>
<dbReference type="Reactome" id="R-DDI-9753281">
    <property type="pathway name" value="Paracetamol ADME"/>
</dbReference>
<dbReference type="PRO" id="PR:Q54K24"/>
<dbReference type="Proteomes" id="UP000002195">
    <property type="component" value="Chromosome 5"/>
</dbReference>
<dbReference type="GO" id="GO:0016020">
    <property type="term" value="C:membrane"/>
    <property type="evidence" value="ECO:0000318"/>
    <property type="project" value="GO_Central"/>
</dbReference>
<dbReference type="GO" id="GO:0140359">
    <property type="term" value="F:ABC-type transporter activity"/>
    <property type="evidence" value="ECO:0007669"/>
    <property type="project" value="InterPro"/>
</dbReference>
<dbReference type="GO" id="GO:0005524">
    <property type="term" value="F:ATP binding"/>
    <property type="evidence" value="ECO:0007669"/>
    <property type="project" value="UniProtKB-KW"/>
</dbReference>
<dbReference type="GO" id="GO:0016887">
    <property type="term" value="F:ATP hydrolysis activity"/>
    <property type="evidence" value="ECO:0007669"/>
    <property type="project" value="InterPro"/>
</dbReference>
<dbReference type="GO" id="GO:0042626">
    <property type="term" value="F:ATPase-coupled transmembrane transporter activity"/>
    <property type="evidence" value="ECO:0000318"/>
    <property type="project" value="GO_Central"/>
</dbReference>
<dbReference type="GO" id="GO:0046686">
    <property type="term" value="P:response to cadmium ion"/>
    <property type="evidence" value="ECO:0007007"/>
    <property type="project" value="dictyBase"/>
</dbReference>
<dbReference type="GO" id="GO:0031288">
    <property type="term" value="P:sorocarp morphogenesis"/>
    <property type="evidence" value="ECO:0000315"/>
    <property type="project" value="dictyBase"/>
</dbReference>
<dbReference type="GO" id="GO:0055085">
    <property type="term" value="P:transmembrane transport"/>
    <property type="evidence" value="ECO:0000318"/>
    <property type="project" value="GO_Central"/>
</dbReference>
<dbReference type="CDD" id="cd18579">
    <property type="entry name" value="ABC_6TM_ABCC_D1"/>
    <property type="match status" value="1"/>
</dbReference>
<dbReference type="CDD" id="cd18580">
    <property type="entry name" value="ABC_6TM_ABCC_D2"/>
    <property type="match status" value="1"/>
</dbReference>
<dbReference type="CDD" id="cd03250">
    <property type="entry name" value="ABCC_MRP_domain1"/>
    <property type="match status" value="1"/>
</dbReference>
<dbReference type="CDD" id="cd03244">
    <property type="entry name" value="ABCC_MRP_domain2"/>
    <property type="match status" value="1"/>
</dbReference>
<dbReference type="FunFam" id="1.20.1560.10:FF:000080">
    <property type="entry name" value="ABC transporter C family member 1"/>
    <property type="match status" value="1"/>
</dbReference>
<dbReference type="FunFam" id="1.20.1560.10:FF:000010">
    <property type="entry name" value="Multidrug resistance-associated ABC transporter"/>
    <property type="match status" value="1"/>
</dbReference>
<dbReference type="FunFam" id="3.40.50.300:FF:000610">
    <property type="entry name" value="Multidrug resistance-associated ABC transporter"/>
    <property type="match status" value="1"/>
</dbReference>
<dbReference type="Gene3D" id="1.20.1560.10">
    <property type="entry name" value="ABC transporter type 1, transmembrane domain"/>
    <property type="match status" value="2"/>
</dbReference>
<dbReference type="Gene3D" id="3.40.50.300">
    <property type="entry name" value="P-loop containing nucleotide triphosphate hydrolases"/>
    <property type="match status" value="2"/>
</dbReference>
<dbReference type="InterPro" id="IPR003593">
    <property type="entry name" value="AAA+_ATPase"/>
</dbReference>
<dbReference type="InterPro" id="IPR011527">
    <property type="entry name" value="ABC1_TM_dom"/>
</dbReference>
<dbReference type="InterPro" id="IPR036640">
    <property type="entry name" value="ABC1_TM_sf"/>
</dbReference>
<dbReference type="InterPro" id="IPR003439">
    <property type="entry name" value="ABC_transporter-like_ATP-bd"/>
</dbReference>
<dbReference type="InterPro" id="IPR017871">
    <property type="entry name" value="ABC_transporter-like_CS"/>
</dbReference>
<dbReference type="InterPro" id="IPR050173">
    <property type="entry name" value="ABC_transporter_C-like"/>
</dbReference>
<dbReference type="InterPro" id="IPR044746">
    <property type="entry name" value="ABCC_6TM_D1"/>
</dbReference>
<dbReference type="InterPro" id="IPR044726">
    <property type="entry name" value="ABCC_6TM_D2"/>
</dbReference>
<dbReference type="InterPro" id="IPR027417">
    <property type="entry name" value="P-loop_NTPase"/>
</dbReference>
<dbReference type="PANTHER" id="PTHR24223:SF172">
    <property type="entry name" value="ABC TRANSPORTER C FAMILY MEMBER 1-RELATED"/>
    <property type="match status" value="1"/>
</dbReference>
<dbReference type="PANTHER" id="PTHR24223">
    <property type="entry name" value="ATP-BINDING CASSETTE SUB-FAMILY C"/>
    <property type="match status" value="1"/>
</dbReference>
<dbReference type="Pfam" id="PF00664">
    <property type="entry name" value="ABC_membrane"/>
    <property type="match status" value="2"/>
</dbReference>
<dbReference type="Pfam" id="PF00005">
    <property type="entry name" value="ABC_tran"/>
    <property type="match status" value="2"/>
</dbReference>
<dbReference type="SMART" id="SM00382">
    <property type="entry name" value="AAA"/>
    <property type="match status" value="2"/>
</dbReference>
<dbReference type="SUPFAM" id="SSF90123">
    <property type="entry name" value="ABC transporter transmembrane region"/>
    <property type="match status" value="2"/>
</dbReference>
<dbReference type="SUPFAM" id="SSF52540">
    <property type="entry name" value="P-loop containing nucleoside triphosphate hydrolases"/>
    <property type="match status" value="2"/>
</dbReference>
<dbReference type="PROSITE" id="PS50929">
    <property type="entry name" value="ABC_TM1F"/>
    <property type="match status" value="2"/>
</dbReference>
<dbReference type="PROSITE" id="PS00211">
    <property type="entry name" value="ABC_TRANSPORTER_1"/>
    <property type="match status" value="2"/>
</dbReference>
<dbReference type="PROSITE" id="PS50893">
    <property type="entry name" value="ABC_TRANSPORTER_2"/>
    <property type="match status" value="2"/>
</dbReference>
<protein>
    <recommendedName>
        <fullName>ABC transporter C family member 14</fullName>
    </recommendedName>
    <alternativeName>
        <fullName>ABC transporter ABCC.14</fullName>
    </alternativeName>
</protein>
<organism>
    <name type="scientific">Dictyostelium discoideum</name>
    <name type="common">Social amoeba</name>
    <dbReference type="NCBI Taxonomy" id="44689"/>
    <lineage>
        <taxon>Eukaryota</taxon>
        <taxon>Amoebozoa</taxon>
        <taxon>Evosea</taxon>
        <taxon>Eumycetozoa</taxon>
        <taxon>Dictyostelia</taxon>
        <taxon>Dictyosteliales</taxon>
        <taxon>Dictyosteliaceae</taxon>
        <taxon>Dictyostelium</taxon>
    </lineage>
</organism>
<sequence>MFINSFETKIKKKFSLLYEKLDDEDENEPSSSPSNSTNNFYKACPEDNSSKWSKISFNWVTKLIMKGYFKESLEMNDIYDLPELNKVQTTSKLLDDINFSNGSKYALIKHIYKNFLPKNKYALISNIFITIFIFLSPICLKFLINYISTDNDNEKSILKGILLCCLLCISILGQSISQELFYWFGMKNSFDVRGALTAKIFEKTLKLSNVSKKKYRSGKIMNIMSIDVENISEFFWTYYLDIVSHTLQILILLGLLCYVVGPSGLVGFGVMVIALPINTMLCTKSSNYLEKSLEYSDSRTNLTSELITNIRPFKMYAWENLFINKIEEQRKQELKFLFLRVLFWIFDHMMIETNATLVLVSTFATYSLTGNTMSLDVTFTAMTIFANLKLPLIYLPEDIYKAIGLMPSVKRIQNFLKSSESLKSKENNQNINFNNNNNNNNNNKNNNNNDDNDIIIENCTFQWNEPENNNLFEFNQSEDEEENEEEEEEENEENIKINENFDYKLNDINLIVPKGKLTMICGVVGSGKTSLVCGLIGEIYKLNGSVSGVPNNISFTSQQPFLLSASLRENILFGNEFDIERYKKVIESTALTKDIVNLAGLDLTEIGERGINLSGGQKQRISLARALYANSDCFIFDEPLSAVDPEVASHLFDHCIQGIDFKSILKTKEIKKNVENETDSEELIKNEIEIENEIIDVNNVISDKNDPNLIEKAKLLVKEDKNEGEVEFNVYKKYFSYGTSGVTLFITISLFFIGQAVYKVSDFWLAIWTERSIEGKSDSFYIGYYLLIIGIFVSLLMIRTYSLSRITFGIGKNLHSALLKSVTYASCRFFDTNPSGRILNRFSKDTSDIDIHMLDLLSEVSICFSELTIGLISIVFIIPIIIIPLTLLFIIYYIYQRLYRPSARELNRWESITLSPVFSLLQECYNGLLTIRTYKQESRFIKEMFDNININLGCIFYSFAVHRWISMRLEVMGCIMVFFTSLAAALFTSNNGLAALSVTTALSLNGYLSWGVRRIVELEVKMNSFQRIQSYIEIPKEGNKLISTGTNQVDSDGLKTISNGDLVNWPNKGIIEFKNVEIKYRPNSEPNLKDLSFKVQSSEKIGIVGRTGAGKTTIASSLFRMVECSKGLILIDGIDISKVQLQKLRSSIGIVPQDPFIFTGTIRSNIDPFNEFTDFEIWESIEKVKLKDAINSMPLKLETALQENGDNGFSYGQKQLLCLCRTILKNFKIILMDEATSSIDYHTAQLIKQTIQENFKDCTTLTIAHRLETIIDCNKIAVIDSGQLIEFDTPSNLMNIPNSKFNKLIKSQTDYSNNKIK</sequence>
<comment type="subcellular location">
    <subcellularLocation>
        <location evidence="2">Membrane</location>
        <topology evidence="2">Multi-pass membrane protein</topology>
    </subcellularLocation>
</comment>
<comment type="similarity">
    <text evidence="4">Belongs to the ABC transporter superfamily. ABCC family. Conjugate transporter (TC 3.A.1.208) subfamily.</text>
</comment>
<proteinExistence type="inferred from homology"/>